<evidence type="ECO:0000255" key="1">
    <source>
        <dbReference type="HAMAP-Rule" id="MF_00274"/>
    </source>
</evidence>
<protein>
    <recommendedName>
        <fullName evidence="1">Nucleoid-associated protein Clos_2855</fullName>
    </recommendedName>
</protein>
<reference key="1">
    <citation type="submission" date="2007-10" db="EMBL/GenBank/DDBJ databases">
        <title>Complete genome of Alkaliphilus oremlandii OhILAs.</title>
        <authorList>
            <person name="Copeland A."/>
            <person name="Lucas S."/>
            <person name="Lapidus A."/>
            <person name="Barry K."/>
            <person name="Detter J.C."/>
            <person name="Glavina del Rio T."/>
            <person name="Hammon N."/>
            <person name="Israni S."/>
            <person name="Dalin E."/>
            <person name="Tice H."/>
            <person name="Pitluck S."/>
            <person name="Chain P."/>
            <person name="Malfatti S."/>
            <person name="Shin M."/>
            <person name="Vergez L."/>
            <person name="Schmutz J."/>
            <person name="Larimer F."/>
            <person name="Land M."/>
            <person name="Hauser L."/>
            <person name="Kyrpides N."/>
            <person name="Mikhailova N."/>
            <person name="Stolz J.F."/>
            <person name="Dawson A."/>
            <person name="Fisher E."/>
            <person name="Crable B."/>
            <person name="Perera E."/>
            <person name="Lisak J."/>
            <person name="Ranganathan M."/>
            <person name="Basu P."/>
            <person name="Richardson P."/>
        </authorList>
    </citation>
    <scope>NUCLEOTIDE SEQUENCE [LARGE SCALE GENOMIC DNA]</scope>
    <source>
        <strain>OhILAs</strain>
    </source>
</reference>
<comment type="function">
    <text evidence="1">Binds to DNA and alters its conformation. May be involved in regulation of gene expression, nucleoid organization and DNA protection.</text>
</comment>
<comment type="subunit">
    <text evidence="1">Homodimer.</text>
</comment>
<comment type="subcellular location">
    <subcellularLocation>
        <location evidence="1">Cytoplasm</location>
        <location evidence="1">Nucleoid</location>
    </subcellularLocation>
</comment>
<comment type="similarity">
    <text evidence="1">Belongs to the YbaB/EbfC family.</text>
</comment>
<keyword id="KW-0963">Cytoplasm</keyword>
<keyword id="KW-0238">DNA-binding</keyword>
<keyword id="KW-1185">Reference proteome</keyword>
<gene>
    <name type="ordered locus">Clos_2855</name>
</gene>
<feature type="chain" id="PRO_1000059193" description="Nucleoid-associated protein Clos_2855">
    <location>
        <begin position="1"/>
        <end position="114"/>
    </location>
</feature>
<sequence>MAKKGGFPGMGGVNMNNMMKQVQKMQKQMEETQAQLEQKVLETSAGGGAVSIKITGKKEIVGISIKPEVVDPDDVEMLEDLIMAAMNEAIRAADDMMSSEMGKITGKMNMPGLF</sequence>
<dbReference type="EMBL" id="CP000853">
    <property type="protein sequence ID" value="ABW20384.1"/>
    <property type="molecule type" value="Genomic_DNA"/>
</dbReference>
<dbReference type="RefSeq" id="WP_012160691.1">
    <property type="nucleotide sequence ID" value="NC_009922.1"/>
</dbReference>
<dbReference type="SMR" id="A8MKQ2"/>
<dbReference type="STRING" id="350688.Clos_2855"/>
<dbReference type="KEGG" id="aoe:Clos_2855"/>
<dbReference type="eggNOG" id="COG0718">
    <property type="taxonomic scope" value="Bacteria"/>
</dbReference>
<dbReference type="HOGENOM" id="CLU_140930_1_0_9"/>
<dbReference type="OrthoDB" id="9795263at2"/>
<dbReference type="Proteomes" id="UP000000269">
    <property type="component" value="Chromosome"/>
</dbReference>
<dbReference type="GO" id="GO:0043590">
    <property type="term" value="C:bacterial nucleoid"/>
    <property type="evidence" value="ECO:0007669"/>
    <property type="project" value="UniProtKB-UniRule"/>
</dbReference>
<dbReference type="GO" id="GO:0005829">
    <property type="term" value="C:cytosol"/>
    <property type="evidence" value="ECO:0007669"/>
    <property type="project" value="TreeGrafter"/>
</dbReference>
<dbReference type="GO" id="GO:0003677">
    <property type="term" value="F:DNA binding"/>
    <property type="evidence" value="ECO:0007669"/>
    <property type="project" value="UniProtKB-UniRule"/>
</dbReference>
<dbReference type="Gene3D" id="3.30.1310.10">
    <property type="entry name" value="Nucleoid-associated protein YbaB-like domain"/>
    <property type="match status" value="1"/>
</dbReference>
<dbReference type="HAMAP" id="MF_00274">
    <property type="entry name" value="DNA_YbaB_EbfC"/>
    <property type="match status" value="1"/>
</dbReference>
<dbReference type="InterPro" id="IPR036894">
    <property type="entry name" value="YbaB-like_sf"/>
</dbReference>
<dbReference type="InterPro" id="IPR004401">
    <property type="entry name" value="YbaB/EbfC"/>
</dbReference>
<dbReference type="NCBIfam" id="TIGR00103">
    <property type="entry name" value="DNA_YbaB_EbfC"/>
    <property type="match status" value="1"/>
</dbReference>
<dbReference type="PANTHER" id="PTHR33449">
    <property type="entry name" value="NUCLEOID-ASSOCIATED PROTEIN YBAB"/>
    <property type="match status" value="1"/>
</dbReference>
<dbReference type="PANTHER" id="PTHR33449:SF1">
    <property type="entry name" value="NUCLEOID-ASSOCIATED PROTEIN YBAB"/>
    <property type="match status" value="1"/>
</dbReference>
<dbReference type="Pfam" id="PF02575">
    <property type="entry name" value="YbaB_DNA_bd"/>
    <property type="match status" value="1"/>
</dbReference>
<dbReference type="PIRSF" id="PIRSF004555">
    <property type="entry name" value="UCP004555"/>
    <property type="match status" value="1"/>
</dbReference>
<dbReference type="SUPFAM" id="SSF82607">
    <property type="entry name" value="YbaB-like"/>
    <property type="match status" value="1"/>
</dbReference>
<name>Y2855_ALKOO</name>
<organism>
    <name type="scientific">Alkaliphilus oremlandii (strain OhILAs)</name>
    <name type="common">Clostridium oremlandii (strain OhILAs)</name>
    <dbReference type="NCBI Taxonomy" id="350688"/>
    <lineage>
        <taxon>Bacteria</taxon>
        <taxon>Bacillati</taxon>
        <taxon>Bacillota</taxon>
        <taxon>Clostridia</taxon>
        <taxon>Peptostreptococcales</taxon>
        <taxon>Natronincolaceae</taxon>
        <taxon>Alkaliphilus</taxon>
    </lineage>
</organism>
<proteinExistence type="inferred from homology"/>
<accession>A8MKQ2</accession>